<dbReference type="EC" id="3.1.21.2" evidence="1"/>
<dbReference type="EMBL" id="BA000026">
    <property type="protein sequence ID" value="BAC43911.1"/>
    <property type="status" value="ALT_INIT"/>
    <property type="molecule type" value="Genomic_DNA"/>
</dbReference>
<dbReference type="RefSeq" id="WP_044891192.1">
    <property type="nucleotide sequence ID" value="NC_004432.1"/>
</dbReference>
<dbReference type="SMR" id="Q8EWT2"/>
<dbReference type="FunCoup" id="Q8EWT2">
    <property type="interactions" value="80"/>
</dbReference>
<dbReference type="STRING" id="272633.gene:10731212"/>
<dbReference type="KEGG" id="mpe:MYPE1190"/>
<dbReference type="eggNOG" id="COG0648">
    <property type="taxonomic scope" value="Bacteria"/>
</dbReference>
<dbReference type="HOGENOM" id="CLU_025885_4_1_14"/>
<dbReference type="InParanoid" id="Q8EWT2"/>
<dbReference type="Proteomes" id="UP000002522">
    <property type="component" value="Chromosome"/>
</dbReference>
<dbReference type="GO" id="GO:0008833">
    <property type="term" value="F:deoxyribonuclease IV (phage-T4-induced) activity"/>
    <property type="evidence" value="ECO:0007669"/>
    <property type="project" value="UniProtKB-UniRule"/>
</dbReference>
<dbReference type="GO" id="GO:0003677">
    <property type="term" value="F:DNA binding"/>
    <property type="evidence" value="ECO:0007669"/>
    <property type="project" value="InterPro"/>
</dbReference>
<dbReference type="GO" id="GO:0003906">
    <property type="term" value="F:DNA-(apurinic or apyrimidinic site) endonuclease activity"/>
    <property type="evidence" value="ECO:0007669"/>
    <property type="project" value="TreeGrafter"/>
</dbReference>
<dbReference type="GO" id="GO:0008081">
    <property type="term" value="F:phosphoric diester hydrolase activity"/>
    <property type="evidence" value="ECO:0007669"/>
    <property type="project" value="TreeGrafter"/>
</dbReference>
<dbReference type="GO" id="GO:0008270">
    <property type="term" value="F:zinc ion binding"/>
    <property type="evidence" value="ECO:0007669"/>
    <property type="project" value="UniProtKB-UniRule"/>
</dbReference>
<dbReference type="GO" id="GO:0006284">
    <property type="term" value="P:base-excision repair"/>
    <property type="evidence" value="ECO:0007669"/>
    <property type="project" value="TreeGrafter"/>
</dbReference>
<dbReference type="CDD" id="cd00019">
    <property type="entry name" value="AP2Ec"/>
    <property type="match status" value="1"/>
</dbReference>
<dbReference type="FunFam" id="3.20.20.150:FF:000001">
    <property type="entry name" value="Probable endonuclease 4"/>
    <property type="match status" value="1"/>
</dbReference>
<dbReference type="Gene3D" id="3.20.20.150">
    <property type="entry name" value="Divalent-metal-dependent TIM barrel enzymes"/>
    <property type="match status" value="1"/>
</dbReference>
<dbReference type="HAMAP" id="MF_00152">
    <property type="entry name" value="Nfo"/>
    <property type="match status" value="1"/>
</dbReference>
<dbReference type="InterPro" id="IPR001719">
    <property type="entry name" value="AP_endonuc_2"/>
</dbReference>
<dbReference type="InterPro" id="IPR018246">
    <property type="entry name" value="AP_endonuc_F2_Zn_BS"/>
</dbReference>
<dbReference type="InterPro" id="IPR036237">
    <property type="entry name" value="Xyl_isomerase-like_sf"/>
</dbReference>
<dbReference type="InterPro" id="IPR013022">
    <property type="entry name" value="Xyl_isomerase-like_TIM-brl"/>
</dbReference>
<dbReference type="NCBIfam" id="TIGR00587">
    <property type="entry name" value="nfo"/>
    <property type="match status" value="1"/>
</dbReference>
<dbReference type="NCBIfam" id="NF002196">
    <property type="entry name" value="PRK01060.1-1"/>
    <property type="match status" value="1"/>
</dbReference>
<dbReference type="PANTHER" id="PTHR21445:SF0">
    <property type="entry name" value="APURINIC-APYRIMIDINIC ENDONUCLEASE"/>
    <property type="match status" value="1"/>
</dbReference>
<dbReference type="PANTHER" id="PTHR21445">
    <property type="entry name" value="ENDONUCLEASE IV ENDODEOXYRIBONUCLEASE IV"/>
    <property type="match status" value="1"/>
</dbReference>
<dbReference type="Pfam" id="PF01261">
    <property type="entry name" value="AP_endonuc_2"/>
    <property type="match status" value="1"/>
</dbReference>
<dbReference type="SMART" id="SM00518">
    <property type="entry name" value="AP2Ec"/>
    <property type="match status" value="1"/>
</dbReference>
<dbReference type="SUPFAM" id="SSF51658">
    <property type="entry name" value="Xylose isomerase-like"/>
    <property type="match status" value="1"/>
</dbReference>
<dbReference type="PROSITE" id="PS00729">
    <property type="entry name" value="AP_NUCLEASE_F2_1"/>
    <property type="match status" value="1"/>
</dbReference>
<dbReference type="PROSITE" id="PS00730">
    <property type="entry name" value="AP_NUCLEASE_F2_2"/>
    <property type="match status" value="1"/>
</dbReference>
<dbReference type="PROSITE" id="PS00731">
    <property type="entry name" value="AP_NUCLEASE_F2_3"/>
    <property type="match status" value="1"/>
</dbReference>
<dbReference type="PROSITE" id="PS51432">
    <property type="entry name" value="AP_NUCLEASE_F2_4"/>
    <property type="match status" value="1"/>
</dbReference>
<sequence>MSKNKLLLGSHVGFKAKNYLVGSVLETLEYDGNCFMVFTGPPQNFMRKELDQNLIDEAVKLMKEKNPLLLENIVVHAPYLINLGSPKESTRSLGLNQLIVEINRTNQIHSKLIVLHPGSALDSDRNVAINHIADNLNKAIEATDNDVIICVETMAGKGSEVGINFEEVSKIVSGVKNKKRIGVCLDTCHMHDSGIDISDPDQTLEEFSKYLDLSYIKVIHLNDSKNEIGSRKDRHDNIGYGKVGFDYLVKWAHNEKLANVPKILETPYRDDKPIYKQEIINLNSKEWKE</sequence>
<gene>
    <name evidence="1" type="primary">nfo</name>
    <name type="ordered locus">MYPE1190</name>
</gene>
<protein>
    <recommendedName>
        <fullName evidence="1">Probable endonuclease 4</fullName>
        <ecNumber evidence="1">3.1.21.2</ecNumber>
    </recommendedName>
    <alternativeName>
        <fullName evidence="1">Endodeoxyribonuclease IV</fullName>
    </alternativeName>
    <alternativeName>
        <fullName evidence="1">Endonuclease IV</fullName>
    </alternativeName>
</protein>
<accession>Q8EWT2</accession>
<feature type="chain" id="PRO_0000190857" description="Probable endonuclease 4">
    <location>
        <begin position="1"/>
        <end position="289"/>
    </location>
</feature>
<feature type="binding site" evidence="1">
    <location>
        <position position="76"/>
    </location>
    <ligand>
        <name>Zn(2+)</name>
        <dbReference type="ChEBI" id="CHEBI:29105"/>
        <label>1</label>
    </ligand>
</feature>
<feature type="binding site" evidence="1">
    <location>
        <position position="116"/>
    </location>
    <ligand>
        <name>Zn(2+)</name>
        <dbReference type="ChEBI" id="CHEBI:29105"/>
        <label>1</label>
    </ligand>
</feature>
<feature type="binding site" evidence="1">
    <location>
        <position position="152"/>
    </location>
    <ligand>
        <name>Zn(2+)</name>
        <dbReference type="ChEBI" id="CHEBI:29105"/>
        <label>1</label>
    </ligand>
</feature>
<feature type="binding site" evidence="1">
    <location>
        <position position="152"/>
    </location>
    <ligand>
        <name>Zn(2+)</name>
        <dbReference type="ChEBI" id="CHEBI:29105"/>
        <label>2</label>
    </ligand>
</feature>
<feature type="binding site" evidence="1">
    <location>
        <position position="186"/>
    </location>
    <ligand>
        <name>Zn(2+)</name>
        <dbReference type="ChEBI" id="CHEBI:29105"/>
        <label>2</label>
    </ligand>
</feature>
<feature type="binding site" evidence="1">
    <location>
        <position position="189"/>
    </location>
    <ligand>
        <name>Zn(2+)</name>
        <dbReference type="ChEBI" id="CHEBI:29105"/>
        <label>3</label>
    </ligand>
</feature>
<feature type="binding site" evidence="1">
    <location>
        <position position="220"/>
    </location>
    <ligand>
        <name>Zn(2+)</name>
        <dbReference type="ChEBI" id="CHEBI:29105"/>
        <label>2</label>
    </ligand>
</feature>
<feature type="binding site" evidence="1">
    <location>
        <position position="233"/>
    </location>
    <ligand>
        <name>Zn(2+)</name>
        <dbReference type="ChEBI" id="CHEBI:29105"/>
        <label>3</label>
    </ligand>
</feature>
<feature type="binding site" evidence="1">
    <location>
        <position position="235"/>
    </location>
    <ligand>
        <name>Zn(2+)</name>
        <dbReference type="ChEBI" id="CHEBI:29105"/>
        <label>3</label>
    </ligand>
</feature>
<feature type="binding site" evidence="1">
    <location>
        <position position="265"/>
    </location>
    <ligand>
        <name>Zn(2+)</name>
        <dbReference type="ChEBI" id="CHEBI:29105"/>
        <label>2</label>
    </ligand>
</feature>
<organism>
    <name type="scientific">Malacoplasma penetrans (strain HF-2)</name>
    <name type="common">Mycoplasma penetrans</name>
    <dbReference type="NCBI Taxonomy" id="272633"/>
    <lineage>
        <taxon>Bacteria</taxon>
        <taxon>Bacillati</taxon>
        <taxon>Mycoplasmatota</taxon>
        <taxon>Mycoplasmoidales</taxon>
        <taxon>Mycoplasmoidaceae</taxon>
        <taxon>Malacoplasma</taxon>
    </lineage>
</organism>
<keyword id="KW-0227">DNA damage</keyword>
<keyword id="KW-0234">DNA repair</keyword>
<keyword id="KW-0255">Endonuclease</keyword>
<keyword id="KW-0378">Hydrolase</keyword>
<keyword id="KW-0479">Metal-binding</keyword>
<keyword id="KW-0540">Nuclease</keyword>
<keyword id="KW-1185">Reference proteome</keyword>
<keyword id="KW-0862">Zinc</keyword>
<proteinExistence type="inferred from homology"/>
<evidence type="ECO:0000255" key="1">
    <source>
        <dbReference type="HAMAP-Rule" id="MF_00152"/>
    </source>
</evidence>
<evidence type="ECO:0000305" key="2"/>
<name>END4_MALP2</name>
<comment type="function">
    <text evidence="1">Endonuclease IV plays a role in DNA repair. It cleaves phosphodiester bonds at apurinic or apyrimidinic (AP) sites, generating a 3'-hydroxyl group and a 5'-terminal sugar phosphate.</text>
</comment>
<comment type="catalytic activity">
    <reaction evidence="1">
        <text>Endonucleolytic cleavage to 5'-phosphooligonucleotide end-products.</text>
        <dbReference type="EC" id="3.1.21.2"/>
    </reaction>
</comment>
<comment type="cofactor">
    <cofactor evidence="1">
        <name>Zn(2+)</name>
        <dbReference type="ChEBI" id="CHEBI:29105"/>
    </cofactor>
    <text evidence="1">Binds 3 Zn(2+) ions.</text>
</comment>
<comment type="similarity">
    <text evidence="1">Belongs to the AP endonuclease 2 family.</text>
</comment>
<comment type="sequence caution" evidence="2">
    <conflict type="erroneous initiation">
        <sequence resource="EMBL-CDS" id="BAC43911"/>
    </conflict>
</comment>
<reference key="1">
    <citation type="journal article" date="2002" name="Nucleic Acids Res.">
        <title>The complete genomic sequence of Mycoplasma penetrans, an intracellular bacterial pathogen in humans.</title>
        <authorList>
            <person name="Sasaki Y."/>
            <person name="Ishikawa J."/>
            <person name="Yamashita A."/>
            <person name="Oshima K."/>
            <person name="Kenri T."/>
            <person name="Furuya K."/>
            <person name="Yoshino C."/>
            <person name="Horino A."/>
            <person name="Shiba T."/>
            <person name="Sasaki T."/>
            <person name="Hattori M."/>
        </authorList>
    </citation>
    <scope>NUCLEOTIDE SEQUENCE [LARGE SCALE GENOMIC DNA]</scope>
    <source>
        <strain>HF-2</strain>
    </source>
</reference>